<gene>
    <name type="ordered locus">BCAH187_A1042</name>
</gene>
<name>Y1042_BACC7</name>
<keyword id="KW-1003">Cell membrane</keyword>
<keyword id="KW-0472">Membrane</keyword>
<keyword id="KW-0812">Transmembrane</keyword>
<keyword id="KW-1133">Transmembrane helix</keyword>
<feature type="chain" id="PRO_0000388269" description="UPF0754 membrane protein BCAH187_A1042">
    <location>
        <begin position="1"/>
        <end position="378"/>
    </location>
</feature>
<feature type="transmembrane region" description="Helical" evidence="2">
    <location>
        <begin position="1"/>
        <end position="21"/>
    </location>
</feature>
<feature type="transmembrane region" description="Helical" evidence="2">
    <location>
        <begin position="357"/>
        <end position="377"/>
    </location>
</feature>
<evidence type="ECO:0000250" key="1"/>
<evidence type="ECO:0000255" key="2"/>
<evidence type="ECO:0000305" key="3"/>
<comment type="subcellular location">
    <subcellularLocation>
        <location evidence="1">Cell membrane</location>
        <topology evidence="1">Multi-pass membrane protein</topology>
    </subcellularLocation>
</comment>
<comment type="similarity">
    <text evidence="3">Belongs to the UPF0754 family.</text>
</comment>
<reference key="1">
    <citation type="submission" date="2008-10" db="EMBL/GenBank/DDBJ databases">
        <title>Genome sequence of Bacillus cereus AH187.</title>
        <authorList>
            <person name="Dodson R.J."/>
            <person name="Durkin A.S."/>
            <person name="Rosovitz M.J."/>
            <person name="Rasko D.A."/>
            <person name="Kolsto A.B."/>
            <person name="Okstad O.A."/>
            <person name="Ravel J."/>
            <person name="Sutton G."/>
        </authorList>
    </citation>
    <scope>NUCLEOTIDE SEQUENCE [LARGE SCALE GENOMIC DNA]</scope>
    <source>
        <strain>AH187</strain>
    </source>
</reference>
<dbReference type="EMBL" id="CP001177">
    <property type="protein sequence ID" value="ACJ79895.1"/>
    <property type="molecule type" value="Genomic_DNA"/>
</dbReference>
<dbReference type="SMR" id="B7HXM3"/>
<dbReference type="KEGG" id="bcr:BCAH187_A1042"/>
<dbReference type="HOGENOM" id="CLU_042384_0_0_9"/>
<dbReference type="Proteomes" id="UP000002214">
    <property type="component" value="Chromosome"/>
</dbReference>
<dbReference type="GO" id="GO:0005886">
    <property type="term" value="C:plasma membrane"/>
    <property type="evidence" value="ECO:0007669"/>
    <property type="project" value="UniProtKB-SubCell"/>
</dbReference>
<dbReference type="InterPro" id="IPR007383">
    <property type="entry name" value="DUF445"/>
</dbReference>
<dbReference type="InterPro" id="IPR016991">
    <property type="entry name" value="UCP032178"/>
</dbReference>
<dbReference type="PANTHER" id="PTHR35791">
    <property type="entry name" value="UPF0754 MEMBRANE PROTEIN YHEB"/>
    <property type="match status" value="1"/>
</dbReference>
<dbReference type="PANTHER" id="PTHR35791:SF1">
    <property type="entry name" value="UPF0754 MEMBRANE PROTEIN YHEB"/>
    <property type="match status" value="1"/>
</dbReference>
<dbReference type="Pfam" id="PF04286">
    <property type="entry name" value="DUF445"/>
    <property type="match status" value="1"/>
</dbReference>
<dbReference type="PIRSF" id="PIRSF032178">
    <property type="entry name" value="UCP032178"/>
    <property type="match status" value="1"/>
</dbReference>
<proteinExistence type="inferred from homology"/>
<protein>
    <recommendedName>
        <fullName>UPF0754 membrane protein BCAH187_A1042</fullName>
    </recommendedName>
</protein>
<organism>
    <name type="scientific">Bacillus cereus (strain AH187)</name>
    <dbReference type="NCBI Taxonomy" id="405534"/>
    <lineage>
        <taxon>Bacteria</taxon>
        <taxon>Bacillati</taxon>
        <taxon>Bacillota</taxon>
        <taxon>Bacilli</taxon>
        <taxon>Bacillales</taxon>
        <taxon>Bacillaceae</taxon>
        <taxon>Bacillus</taxon>
        <taxon>Bacillus cereus group</taxon>
    </lineage>
</organism>
<sequence length="378" mass="42651">MNIWLSMLTTTGLGAIIGGFTNHLAIKMLFRPHRPIYIGKFQVPFTPGLIPKRRDELAVQLGKMVVEHLLTPEGIGKKLTNEEFQKGLIHWAQVEVDKVITNEQSLRHMLEKWDVAHVEKEATEKIEQVITEKIQAFLEEYYTYTWEQALPHSVHEKIENAIPNVSAFILGRATQFFESEEGKARLSKMIDDFFASRGTLLNLVGMFLGNVSVVDRVQPEVIKFLGQDGTKQLLTEVLQKELEKLKGRDVKEVETFVEKEMIVSSILSAVKVEETVSKFLNQSVQQVCEPVRETIMEKVVPGVVTKGLKWGAENVASILNNLHLAEIVQQEVSTFSTERLEDLVLSITKNELKMITYLGALLGGMIGIVQGLLLLFLK</sequence>
<accession>B7HXM3</accession>